<keyword id="KW-0067">ATP-binding</keyword>
<keyword id="KW-0436">Ligase</keyword>
<keyword id="KW-0547">Nucleotide-binding</keyword>
<keyword id="KW-0554">One-carbon metabolism</keyword>
<gene>
    <name evidence="1" type="primary">fhs</name>
    <name type="ordered locus">lin1990</name>
</gene>
<name>FTHS_LISIN</name>
<evidence type="ECO:0000255" key="1">
    <source>
        <dbReference type="HAMAP-Rule" id="MF_01543"/>
    </source>
</evidence>
<dbReference type="EC" id="6.3.4.3" evidence="1"/>
<dbReference type="EMBL" id="AL596170">
    <property type="protein sequence ID" value="CAC97220.1"/>
    <property type="molecule type" value="Genomic_DNA"/>
</dbReference>
<dbReference type="PIR" id="AD1681">
    <property type="entry name" value="AD1681"/>
</dbReference>
<dbReference type="RefSeq" id="WP_010991695.1">
    <property type="nucleotide sequence ID" value="NC_003212.1"/>
</dbReference>
<dbReference type="SMR" id="Q92AD2"/>
<dbReference type="STRING" id="272626.gene:17566348"/>
<dbReference type="GeneID" id="93235328"/>
<dbReference type="KEGG" id="lin:lin1990"/>
<dbReference type="eggNOG" id="COG2759">
    <property type="taxonomic scope" value="Bacteria"/>
</dbReference>
<dbReference type="HOGENOM" id="CLU_003601_3_3_9"/>
<dbReference type="OrthoDB" id="9761733at2"/>
<dbReference type="UniPathway" id="UPA00193"/>
<dbReference type="Proteomes" id="UP000002513">
    <property type="component" value="Chromosome"/>
</dbReference>
<dbReference type="GO" id="GO:0005524">
    <property type="term" value="F:ATP binding"/>
    <property type="evidence" value="ECO:0007669"/>
    <property type="project" value="UniProtKB-UniRule"/>
</dbReference>
<dbReference type="GO" id="GO:0004329">
    <property type="term" value="F:formate-tetrahydrofolate ligase activity"/>
    <property type="evidence" value="ECO:0007669"/>
    <property type="project" value="UniProtKB-UniRule"/>
</dbReference>
<dbReference type="GO" id="GO:0035999">
    <property type="term" value="P:tetrahydrofolate interconversion"/>
    <property type="evidence" value="ECO:0007669"/>
    <property type="project" value="UniProtKB-UniRule"/>
</dbReference>
<dbReference type="CDD" id="cd00477">
    <property type="entry name" value="FTHFS"/>
    <property type="match status" value="1"/>
</dbReference>
<dbReference type="FunFam" id="3.30.1510.10:FF:000001">
    <property type="entry name" value="Formate--tetrahydrofolate ligase"/>
    <property type="match status" value="1"/>
</dbReference>
<dbReference type="FunFam" id="3.10.410.10:FF:000001">
    <property type="entry name" value="Putative formate--tetrahydrofolate ligase"/>
    <property type="match status" value="1"/>
</dbReference>
<dbReference type="Gene3D" id="3.30.1510.10">
    <property type="entry name" value="Domain 2, N(10)-formyltetrahydrofolate synthetase"/>
    <property type="match status" value="1"/>
</dbReference>
<dbReference type="Gene3D" id="3.10.410.10">
    <property type="entry name" value="Formyltetrahydrofolate synthetase, domain 3"/>
    <property type="match status" value="1"/>
</dbReference>
<dbReference type="Gene3D" id="3.40.50.300">
    <property type="entry name" value="P-loop containing nucleotide triphosphate hydrolases"/>
    <property type="match status" value="1"/>
</dbReference>
<dbReference type="HAMAP" id="MF_01543">
    <property type="entry name" value="FTHFS"/>
    <property type="match status" value="1"/>
</dbReference>
<dbReference type="InterPro" id="IPR000559">
    <property type="entry name" value="Formate_THF_ligase"/>
</dbReference>
<dbReference type="InterPro" id="IPR020628">
    <property type="entry name" value="Formate_THF_ligase_CS"/>
</dbReference>
<dbReference type="InterPro" id="IPR027417">
    <property type="entry name" value="P-loop_NTPase"/>
</dbReference>
<dbReference type="NCBIfam" id="NF010030">
    <property type="entry name" value="PRK13505.1"/>
    <property type="match status" value="1"/>
</dbReference>
<dbReference type="Pfam" id="PF01268">
    <property type="entry name" value="FTHFS"/>
    <property type="match status" value="1"/>
</dbReference>
<dbReference type="SUPFAM" id="SSF52540">
    <property type="entry name" value="P-loop containing nucleoside triphosphate hydrolases"/>
    <property type="match status" value="1"/>
</dbReference>
<dbReference type="PROSITE" id="PS00721">
    <property type="entry name" value="FTHFS_1"/>
    <property type="match status" value="1"/>
</dbReference>
<dbReference type="PROSITE" id="PS00722">
    <property type="entry name" value="FTHFS_2"/>
    <property type="match status" value="1"/>
</dbReference>
<reference key="1">
    <citation type="journal article" date="2001" name="Science">
        <title>Comparative genomics of Listeria species.</title>
        <authorList>
            <person name="Glaser P."/>
            <person name="Frangeul L."/>
            <person name="Buchrieser C."/>
            <person name="Rusniok C."/>
            <person name="Amend A."/>
            <person name="Baquero F."/>
            <person name="Berche P."/>
            <person name="Bloecker H."/>
            <person name="Brandt P."/>
            <person name="Chakraborty T."/>
            <person name="Charbit A."/>
            <person name="Chetouani F."/>
            <person name="Couve E."/>
            <person name="de Daruvar A."/>
            <person name="Dehoux P."/>
            <person name="Domann E."/>
            <person name="Dominguez-Bernal G."/>
            <person name="Duchaud E."/>
            <person name="Durant L."/>
            <person name="Dussurget O."/>
            <person name="Entian K.-D."/>
            <person name="Fsihi H."/>
            <person name="Garcia-del Portillo F."/>
            <person name="Garrido P."/>
            <person name="Gautier L."/>
            <person name="Goebel W."/>
            <person name="Gomez-Lopez N."/>
            <person name="Hain T."/>
            <person name="Hauf J."/>
            <person name="Jackson D."/>
            <person name="Jones L.-M."/>
            <person name="Kaerst U."/>
            <person name="Kreft J."/>
            <person name="Kuhn M."/>
            <person name="Kunst F."/>
            <person name="Kurapkat G."/>
            <person name="Madueno E."/>
            <person name="Maitournam A."/>
            <person name="Mata Vicente J."/>
            <person name="Ng E."/>
            <person name="Nedjari H."/>
            <person name="Nordsiek G."/>
            <person name="Novella S."/>
            <person name="de Pablos B."/>
            <person name="Perez-Diaz J.-C."/>
            <person name="Purcell R."/>
            <person name="Remmel B."/>
            <person name="Rose M."/>
            <person name="Schlueter T."/>
            <person name="Simoes N."/>
            <person name="Tierrez A."/>
            <person name="Vazquez-Boland J.-A."/>
            <person name="Voss H."/>
            <person name="Wehland J."/>
            <person name="Cossart P."/>
        </authorList>
    </citation>
    <scope>NUCLEOTIDE SEQUENCE [LARGE SCALE GENOMIC DNA]</scope>
    <source>
        <strain>ATCC BAA-680 / CLIP 11262</strain>
    </source>
</reference>
<proteinExistence type="inferred from homology"/>
<comment type="catalytic activity">
    <reaction evidence="1">
        <text>(6S)-5,6,7,8-tetrahydrofolate + formate + ATP = (6R)-10-formyltetrahydrofolate + ADP + phosphate</text>
        <dbReference type="Rhea" id="RHEA:20221"/>
        <dbReference type="ChEBI" id="CHEBI:15740"/>
        <dbReference type="ChEBI" id="CHEBI:30616"/>
        <dbReference type="ChEBI" id="CHEBI:43474"/>
        <dbReference type="ChEBI" id="CHEBI:57453"/>
        <dbReference type="ChEBI" id="CHEBI:195366"/>
        <dbReference type="ChEBI" id="CHEBI:456216"/>
        <dbReference type="EC" id="6.3.4.3"/>
    </reaction>
</comment>
<comment type="pathway">
    <text evidence="1">One-carbon metabolism; tetrahydrofolate interconversion.</text>
</comment>
<comment type="similarity">
    <text evidence="1">Belongs to the formate--tetrahydrofolate ligase family.</text>
</comment>
<sequence length="560" mass="60157">MSNKVKSDIEIASVAEILPVTTIAEHLGLDADALELYGKYKAKLSYDTIHSLKDKEQGKLVLVTAINPTPAGEGKSTVTVGLGDALSKKDKKTVIALREPSLGPTMGIKGGATGGGYAQVIPMEDINLHFTGDFHAITAANNALSAFIDNHMQQGNDLGIDGRRIVWKRVVDLNDRALRKVVVGLGGPIQGVPREDGFDITVASEIMAIICLASDLKDLKKRLSEIVIGYNYKKEPITVGEMGYEGALTLLLKDALKPNLVQTLEHTPAIVHGGPFANIAHGCNSVSATSTALKLGEYVVTEAGFGADLGAEKFLDIKVPALGKAPDCVVIVATIRALKMHGGALKTELSEENVDALAKGFTNLQKHTESIQTFGIPYVVAINKFITDSDAEVAKLEQLCEEHGIPFSLTEVWEKGGDGGLELADKVIAAVESGEEDYKRIYDDAWSIEEKLEAIVTKVYGGIGVELSSKAQKQIVEFKKYGWDRYPICMAKTQYSLSDDPTLLGRPTDFVIHIREFIPKLGAGFVVALTGDVMTMPGLPKKPAALNMDVDENGNAQGLF</sequence>
<feature type="chain" id="PRO_0000199356" description="Formate--tetrahydrofolate ligase">
    <location>
        <begin position="1"/>
        <end position="560"/>
    </location>
</feature>
<feature type="binding site" evidence="1">
    <location>
        <begin position="69"/>
        <end position="76"/>
    </location>
    <ligand>
        <name>ATP</name>
        <dbReference type="ChEBI" id="CHEBI:30616"/>
    </ligand>
</feature>
<accession>Q92AD2</accession>
<protein>
    <recommendedName>
        <fullName evidence="1">Formate--tetrahydrofolate ligase</fullName>
        <ecNumber evidence="1">6.3.4.3</ecNumber>
    </recommendedName>
    <alternativeName>
        <fullName evidence="1">Formyltetrahydrofolate synthetase</fullName>
        <shortName evidence="1">FHS</shortName>
        <shortName evidence="1">FTHFS</shortName>
    </alternativeName>
</protein>
<organism>
    <name type="scientific">Listeria innocua serovar 6a (strain ATCC BAA-680 / CLIP 11262)</name>
    <dbReference type="NCBI Taxonomy" id="272626"/>
    <lineage>
        <taxon>Bacteria</taxon>
        <taxon>Bacillati</taxon>
        <taxon>Bacillota</taxon>
        <taxon>Bacilli</taxon>
        <taxon>Bacillales</taxon>
        <taxon>Listeriaceae</taxon>
        <taxon>Listeria</taxon>
    </lineage>
</organism>